<proteinExistence type="evidence at protein level"/>
<organism>
    <name type="scientific">Crithidia fasciculata</name>
    <dbReference type="NCBI Taxonomy" id="5656"/>
    <lineage>
        <taxon>Eukaryota</taxon>
        <taxon>Discoba</taxon>
        <taxon>Euglenozoa</taxon>
        <taxon>Kinetoplastea</taxon>
        <taxon>Metakinetoplastina</taxon>
        <taxon>Trypanosomatida</taxon>
        <taxon>Trypanosomatidae</taxon>
        <taxon>Leishmaniinae</taxon>
        <taxon>Crithidia</taxon>
    </lineage>
</organism>
<dbReference type="EMBL" id="AF008943">
    <property type="protein sequence ID" value="AAB70749.1"/>
    <property type="molecule type" value="Genomic_DNA"/>
</dbReference>
<dbReference type="SMR" id="Q9TY84"/>
<dbReference type="VEuPathDB" id="TriTrypDB:CFAC1_300049900"/>
<dbReference type="GO" id="GO:0020023">
    <property type="term" value="C:kinetoplast"/>
    <property type="evidence" value="ECO:0000314"/>
    <property type="project" value="UniProtKB"/>
</dbReference>
<dbReference type="GO" id="GO:0003677">
    <property type="term" value="F:DNA binding"/>
    <property type="evidence" value="ECO:0000314"/>
    <property type="project" value="UniProtKB"/>
</dbReference>
<dbReference type="CDD" id="cd00084">
    <property type="entry name" value="HMG-box_SF"/>
    <property type="match status" value="1"/>
</dbReference>
<dbReference type="Gene3D" id="1.10.30.10">
    <property type="entry name" value="High mobility group box domain"/>
    <property type="match status" value="1"/>
</dbReference>
<dbReference type="InterPro" id="IPR009071">
    <property type="entry name" value="HMG_box_dom"/>
</dbReference>
<dbReference type="InterPro" id="IPR036910">
    <property type="entry name" value="HMG_box_dom_sf"/>
</dbReference>
<dbReference type="InterPro" id="IPR052695">
    <property type="entry name" value="Kinetoplast-DNA-binding"/>
</dbReference>
<dbReference type="PANTHER" id="PTHR37564:SF4">
    <property type="entry name" value="DNA-ASSOCIATED PROTEIN, PUTATIVE-RELATED"/>
    <property type="match status" value="1"/>
</dbReference>
<dbReference type="PANTHER" id="PTHR37564">
    <property type="entry name" value="KINETOPLAST DNA-ASSOCIATED PROTEIN"/>
    <property type="match status" value="1"/>
</dbReference>
<dbReference type="SMART" id="SM00398">
    <property type="entry name" value="HMG"/>
    <property type="match status" value="1"/>
</dbReference>
<dbReference type="SUPFAM" id="SSF47095">
    <property type="entry name" value="HMG-box"/>
    <property type="match status" value="1"/>
</dbReference>
<evidence type="ECO:0000256" key="1">
    <source>
        <dbReference type="SAM" id="MobiDB-lite"/>
    </source>
</evidence>
<evidence type="ECO:0000269" key="2">
    <source>
    </source>
</evidence>
<evidence type="ECO:0000269" key="3">
    <source>
    </source>
</evidence>
<evidence type="ECO:0000305" key="4"/>
<protein>
    <recommendedName>
        <fullName>kinetoplast-associated protein 2-2</fullName>
    </recommendedName>
    <alternativeName>
        <fullName>Histone H1-like protein p18-2</fullName>
    </alternativeName>
</protein>
<keyword id="KW-0903">Direct protein sequencing</keyword>
<keyword id="KW-0238">DNA-binding</keyword>
<keyword id="KW-0419">Kinetoplast</keyword>
<keyword id="KW-0496">Mitochondrion</keyword>
<gene>
    <name type="primary">KAP2-2</name>
</gene>
<feature type="propeptide" id="PRO_0000409300">
    <location>
        <begin position="1"/>
        <end position="10"/>
    </location>
</feature>
<feature type="chain" id="PRO_0000409301" description="kinetoplast-associated protein 2-2">
    <location>
        <begin position="11"/>
        <end position="130"/>
    </location>
</feature>
<feature type="region of interest" description="Disordered" evidence="1">
    <location>
        <begin position="95"/>
        <end position="130"/>
    </location>
</feature>
<feature type="compositionally biased region" description="Basic residues" evidence="1">
    <location>
        <begin position="103"/>
        <end position="130"/>
    </location>
</feature>
<reference key="1">
    <citation type="journal article" date="1996" name="Mol. Cell. Biol.">
        <title>Nucleus-encoded histone H1-like proteins are associated with kinetoplast DNA in the trypanosomatid Crithidia fasciculata.</title>
        <authorList>
            <person name="Xu C.W."/>
            <person name="Hines J.C."/>
            <person name="Engel M.L."/>
            <person name="Russell D.G."/>
            <person name="Ray D.S."/>
        </authorList>
    </citation>
    <scope>NUCLEOTIDE SEQUENCE [MRNA]</scope>
    <scope>DNA-BINDING</scope>
    <scope>FUNCTION</scope>
    <scope>SUBCELLULAR LOCATION</scope>
</reference>
<reference key="2">
    <citation type="journal article" date="1997" name="Mol. Biochem. Parasitol.">
        <title>Tandem arrangement of two genes encoding kinetoplast-associated H1 histone-like proteins.</title>
        <authorList>
            <person name="Hines J.C."/>
            <person name="Ray D.S."/>
        </authorList>
    </citation>
    <scope>NUCLEOTIDE SEQUENCE [GENOMIC DNA]</scope>
</reference>
<reference key="3">
    <citation type="journal article" date="1993" name="Proc. Natl. Acad. Sci. U.S.A.">
        <title>Isolation of proteins associated with kinetoplast DNA networks in vivo.</title>
        <authorList>
            <person name="Xu C."/>
            <person name="Ray D.S."/>
        </authorList>
    </citation>
    <scope>NUCLEOTIDE SEQUENCE [MRNA] OF 1-17</scope>
    <scope>PROTEIN SEQUENCE OF 10-24</scope>
    <scope>DNA-BINDING</scope>
    <scope>SUBCELLULAR LOCATION</scope>
</reference>
<accession>Q9TY84</accession>
<sequence>MLRRTVSNFAMSPYMLFISDLAKTGKLKGIRTPGKFVGKKYRQLSAKEKAALQQRAKQASTPAMTAYRRMAHREMSNKSVPIEQRRANLTKKWNETKQAQRAKAQKAQKKPKSAKSKVKKAAKKAKKSKK</sequence>
<name>KAP22_CRIFA</name>
<comment type="function">
    <text evidence="3">Histone H1-like DNA-binding protein involved in the organization and segregation of kinetoplast DNA (kDNA). The mitochondrial DNA of kinetoplastid protozoa consists of about 5,000 minicircles and 20 to 30 maxicircles. These circular DNAs are held together by catenation into a highly organized compact disk structure referred to as a kinetoplast DNA (kDNA) network. Binds preferentially to a specific fragment of minicircle DNA and is able to compact kDNA networks through DNA charge neutralization and condensation.</text>
</comment>
<comment type="subunit">
    <text>Associates with the kinetoplast DNA network.</text>
</comment>
<comment type="subcellular location">
    <subcellularLocation>
        <location evidence="2 3">Mitochondrion matrix</location>
        <location evidence="2 3">Kinetoplast</location>
    </subcellularLocation>
</comment>
<comment type="similarity">
    <text evidence="4">Belongs to the KAP family.</text>
</comment>